<evidence type="ECO:0000250" key="1">
    <source>
        <dbReference type="UniProtKB" id="Q9D806"/>
    </source>
</evidence>
<evidence type="ECO:0000255" key="2"/>
<evidence type="ECO:0000305" key="3"/>
<keyword id="KW-1003">Cell membrane</keyword>
<keyword id="KW-0966">Cell projection</keyword>
<keyword id="KW-0217">Developmental protein</keyword>
<keyword id="KW-0325">Glycoprotein</keyword>
<keyword id="KW-0472">Membrane</keyword>
<keyword id="KW-1185">Reference proteome</keyword>
<keyword id="KW-0732">Signal</keyword>
<keyword id="KW-0812">Transmembrane</keyword>
<keyword id="KW-1133">Transmembrane helix</keyword>
<dbReference type="EMBL" id="BC088439">
    <property type="protein sequence ID" value="AAH88439.1"/>
    <property type="status" value="ALT_INIT"/>
    <property type="molecule type" value="mRNA"/>
</dbReference>
<dbReference type="RefSeq" id="NP_001138342.1">
    <property type="nucleotide sequence ID" value="NM_001144870.1"/>
</dbReference>
<dbReference type="FunCoup" id="Q5M7U7">
    <property type="interactions" value="202"/>
</dbReference>
<dbReference type="STRING" id="10116.ENSRNOP00000013927"/>
<dbReference type="GlyCosmos" id="Q5M7U7">
    <property type="glycosylation" value="3 sites, No reported glycans"/>
</dbReference>
<dbReference type="GlyGen" id="Q5M7U7">
    <property type="glycosylation" value="3 sites"/>
</dbReference>
<dbReference type="PhosphoSitePlus" id="Q5M7U7"/>
<dbReference type="PaxDb" id="10116-ENSRNOP00000013927"/>
<dbReference type="Ensembl" id="ENSRNOT00000013927.7">
    <property type="protein sequence ID" value="ENSRNOP00000013927.4"/>
    <property type="gene ID" value="ENSRNOG00000010480.7"/>
</dbReference>
<dbReference type="GeneID" id="500947"/>
<dbReference type="KEGG" id="rno:500947"/>
<dbReference type="UCSC" id="RGD:1563328">
    <property type="organism name" value="rat"/>
</dbReference>
<dbReference type="AGR" id="RGD:1563328"/>
<dbReference type="CTD" id="387804"/>
<dbReference type="RGD" id="1563328">
    <property type="gene designation" value="Vstm5"/>
</dbReference>
<dbReference type="eggNOG" id="ENOG502S0GW">
    <property type="taxonomic scope" value="Eukaryota"/>
</dbReference>
<dbReference type="GeneTree" id="ENSGT01130000278319"/>
<dbReference type="HOGENOM" id="CLU_118644_0_0_1"/>
<dbReference type="InParanoid" id="Q5M7U7"/>
<dbReference type="OMA" id="KIVEWQP"/>
<dbReference type="OrthoDB" id="9933251at2759"/>
<dbReference type="PhylomeDB" id="Q5M7U7"/>
<dbReference type="TreeFam" id="TF332950"/>
<dbReference type="PRO" id="PR:Q5M7U7"/>
<dbReference type="Proteomes" id="UP000002494">
    <property type="component" value="Chromosome 8"/>
</dbReference>
<dbReference type="Bgee" id="ENSRNOG00000010480">
    <property type="expression patterns" value="Expressed in kidney and 9 other cell types or tissues"/>
</dbReference>
<dbReference type="GO" id="GO:0030424">
    <property type="term" value="C:axon"/>
    <property type="evidence" value="ECO:0000250"/>
    <property type="project" value="UniProtKB"/>
</dbReference>
<dbReference type="GO" id="GO:0030425">
    <property type="term" value="C:dendrite"/>
    <property type="evidence" value="ECO:0000250"/>
    <property type="project" value="UniProtKB"/>
</dbReference>
<dbReference type="GO" id="GO:0016020">
    <property type="term" value="C:membrane"/>
    <property type="evidence" value="ECO:0000250"/>
    <property type="project" value="UniProtKB"/>
</dbReference>
<dbReference type="GO" id="GO:0005886">
    <property type="term" value="C:plasma membrane"/>
    <property type="evidence" value="ECO:0000250"/>
    <property type="project" value="UniProtKB"/>
</dbReference>
<dbReference type="GO" id="GO:0046847">
    <property type="term" value="P:filopodium assembly"/>
    <property type="evidence" value="ECO:0000250"/>
    <property type="project" value="UniProtKB"/>
</dbReference>
<dbReference type="GO" id="GO:0006955">
    <property type="term" value="P:immune response"/>
    <property type="evidence" value="ECO:0000318"/>
    <property type="project" value="GO_Central"/>
</dbReference>
<dbReference type="GO" id="GO:1904891">
    <property type="term" value="P:positive regulation of excitatory synapse assembly"/>
    <property type="evidence" value="ECO:0000250"/>
    <property type="project" value="UniProtKB"/>
</dbReference>
<dbReference type="GO" id="GO:0051260">
    <property type="term" value="P:protein homooligomerization"/>
    <property type="evidence" value="ECO:0000250"/>
    <property type="project" value="UniProtKB"/>
</dbReference>
<dbReference type="GO" id="GO:0021517">
    <property type="term" value="P:ventral spinal cord development"/>
    <property type="evidence" value="ECO:0000266"/>
    <property type="project" value="RGD"/>
</dbReference>
<dbReference type="FunFam" id="2.60.40.10:FF:001595">
    <property type="entry name" value="V-set and transmembrane domain containing 5"/>
    <property type="match status" value="1"/>
</dbReference>
<dbReference type="Gene3D" id="2.60.40.10">
    <property type="entry name" value="Immunoglobulins"/>
    <property type="match status" value="1"/>
</dbReference>
<dbReference type="InterPro" id="IPR015631">
    <property type="entry name" value="CD2/SLAM_rcpt"/>
</dbReference>
<dbReference type="InterPro" id="IPR036179">
    <property type="entry name" value="Ig-like_dom_sf"/>
</dbReference>
<dbReference type="InterPro" id="IPR013783">
    <property type="entry name" value="Ig-like_fold"/>
</dbReference>
<dbReference type="InterPro" id="IPR024303">
    <property type="entry name" value="NK_rcpt_2B4_Ig_dom"/>
</dbReference>
<dbReference type="PANTHER" id="PTHR12080">
    <property type="entry name" value="SIGNALING LYMPHOCYTIC ACTIVATION MOLECULE"/>
    <property type="match status" value="1"/>
</dbReference>
<dbReference type="PANTHER" id="PTHR12080:SF93">
    <property type="entry name" value="V-SET AND TRANSMEMBRANE DOMAIN-CONTAINING PROTEIN 5"/>
    <property type="match status" value="1"/>
</dbReference>
<dbReference type="Pfam" id="PF11465">
    <property type="entry name" value="Receptor_2B4"/>
    <property type="match status" value="1"/>
</dbReference>
<dbReference type="SUPFAM" id="SSF48726">
    <property type="entry name" value="Immunoglobulin"/>
    <property type="match status" value="1"/>
</dbReference>
<sequence>MRPPRCVGRTQGIPLGLLAFWVATARCLQSQGVSLYIPRSAINATVQEDILLSVDYICHGVPTIEWEYTPNWGVQKIVEWKPGTPANVSQSHRDRVCTFDNGSIQLFSVGVRDSGYYVITVTEHPGSSQSGTILLHVSEIRYEDLHFVAVFFALLAAVAVVLISLMWVCNQCAYKFQRKRRYKLRESTTEEIEMKDVEC</sequence>
<protein>
    <recommendedName>
        <fullName>V-set and transmembrane domain-containing protein 5</fullName>
    </recommendedName>
</protein>
<feature type="signal peptide" evidence="2">
    <location>
        <begin position="1"/>
        <end position="27"/>
    </location>
</feature>
<feature type="chain" id="PRO_0000340695" description="V-set and transmembrane domain-containing protein 5">
    <location>
        <begin position="28"/>
        <end position="199"/>
    </location>
</feature>
<feature type="topological domain" description="Extracellular" evidence="2">
    <location>
        <begin position="28"/>
        <end position="146"/>
    </location>
</feature>
<feature type="transmembrane region" description="Helical" evidence="2">
    <location>
        <begin position="147"/>
        <end position="167"/>
    </location>
</feature>
<feature type="topological domain" description="Cytoplasmic" evidence="2">
    <location>
        <begin position="168"/>
        <end position="199"/>
    </location>
</feature>
<feature type="domain" description="Ig-like C2-type">
    <location>
        <begin position="36"/>
        <end position="138"/>
    </location>
</feature>
<feature type="region of interest" description="Important for CDC42-dependent filopodia induction" evidence="1">
    <location>
        <begin position="169"/>
        <end position="185"/>
    </location>
</feature>
<feature type="glycosylation site" description="N-linked (GlcNAc...) asparagine" evidence="2">
    <location>
        <position position="43"/>
    </location>
</feature>
<feature type="glycosylation site" description="N-linked (GlcNAc...) asparagine" evidence="2">
    <location>
        <position position="87"/>
    </location>
</feature>
<feature type="glycosylation site" description="N-linked (GlcNAc...) asparagine" evidence="2">
    <location>
        <position position="101"/>
    </location>
</feature>
<reference key="1">
    <citation type="journal article" date="2004" name="Genome Res.">
        <title>The status, quality, and expansion of the NIH full-length cDNA project: the Mammalian Gene Collection (MGC).</title>
        <authorList>
            <consortium name="The MGC Project Team"/>
        </authorList>
    </citation>
    <scope>NUCLEOTIDE SEQUENCE [LARGE SCALE MRNA]</scope>
    <source>
        <tissue>Kidney</tissue>
    </source>
</reference>
<organism>
    <name type="scientific">Rattus norvegicus</name>
    <name type="common">Rat</name>
    <dbReference type="NCBI Taxonomy" id="10116"/>
    <lineage>
        <taxon>Eukaryota</taxon>
        <taxon>Metazoa</taxon>
        <taxon>Chordata</taxon>
        <taxon>Craniata</taxon>
        <taxon>Vertebrata</taxon>
        <taxon>Euteleostomi</taxon>
        <taxon>Mammalia</taxon>
        <taxon>Eutheria</taxon>
        <taxon>Euarchontoglires</taxon>
        <taxon>Glires</taxon>
        <taxon>Rodentia</taxon>
        <taxon>Myomorpha</taxon>
        <taxon>Muroidea</taxon>
        <taxon>Muridae</taxon>
        <taxon>Murinae</taxon>
        <taxon>Rattus</taxon>
    </lineage>
</organism>
<gene>
    <name type="primary">Vstm5</name>
</gene>
<comment type="function">
    <text evidence="1">Cell adhesion-like membrane protein of the central nervous system (CNS) which modulates both the position and complexity of central neurons by altering their membrane morphology and dynamics. Involved in the formation of neuronal dendrites and protrusions including dendritic filopodia. In synaptogenesis, regulates synapse formation by altering dendritic spine morphology and actin distribution. Promotes formation of unstable neuronal spines such as thin and branched types. Regulates neuronal morphogenesis and migration during cortical development in the brain.</text>
</comment>
<comment type="subunit">
    <text evidence="1">Can homooligomerize through cis interactions within the same cell membrane.</text>
</comment>
<comment type="subcellular location">
    <subcellularLocation>
        <location evidence="1">Cell membrane</location>
        <topology evidence="3">Single-pass type I membrane protein</topology>
    </subcellularLocation>
    <subcellularLocation>
        <location evidence="1">Cell projection</location>
        <location evidence="1">Dendrite</location>
    </subcellularLocation>
    <subcellularLocation>
        <location evidence="1">Cell projection</location>
        <location evidence="1">Axon</location>
    </subcellularLocation>
</comment>
<comment type="PTM">
    <text evidence="1">N-glycosylated.</text>
</comment>
<comment type="sequence caution" evidence="3">
    <conflict type="erroneous initiation">
        <sequence resource="EMBL-CDS" id="AAH88439"/>
    </conflict>
    <text>Extended N-terminus.</text>
</comment>
<name>VSTM5_RAT</name>
<accession>Q5M7U7</accession>
<proteinExistence type="evidence at transcript level"/>